<name>RL2_SALA4</name>
<feature type="chain" id="PRO_1000141606" description="Large ribosomal subunit protein uL2">
    <location>
        <begin position="1"/>
        <end position="273"/>
    </location>
</feature>
<feature type="region of interest" description="Disordered" evidence="2">
    <location>
        <begin position="28"/>
        <end position="53"/>
    </location>
</feature>
<feature type="region of interest" description="Disordered" evidence="2">
    <location>
        <begin position="221"/>
        <end position="273"/>
    </location>
</feature>
<feature type="compositionally biased region" description="Low complexity" evidence="2">
    <location>
        <begin position="39"/>
        <end position="48"/>
    </location>
</feature>
<gene>
    <name evidence="1" type="primary">rplB</name>
    <name type="ordered locus">SeAg_B3633</name>
</gene>
<protein>
    <recommendedName>
        <fullName evidence="1">Large ribosomal subunit protein uL2</fullName>
    </recommendedName>
    <alternativeName>
        <fullName evidence="3">50S ribosomal protein L2</fullName>
    </alternativeName>
</protein>
<keyword id="KW-0687">Ribonucleoprotein</keyword>
<keyword id="KW-0689">Ribosomal protein</keyword>
<keyword id="KW-0694">RNA-binding</keyword>
<keyword id="KW-0699">rRNA-binding</keyword>
<comment type="function">
    <text evidence="1">One of the primary rRNA binding proteins. Required for association of the 30S and 50S subunits to form the 70S ribosome, for tRNA binding and peptide bond formation. It has been suggested to have peptidyltransferase activity; this is somewhat controversial. Makes several contacts with the 16S rRNA in the 70S ribosome.</text>
</comment>
<comment type="subunit">
    <text evidence="1">Part of the 50S ribosomal subunit. Forms a bridge to the 30S subunit in the 70S ribosome.</text>
</comment>
<comment type="similarity">
    <text evidence="1">Belongs to the universal ribosomal protein uL2 family.</text>
</comment>
<proteinExistence type="inferred from homology"/>
<reference key="1">
    <citation type="journal article" date="2011" name="J. Bacteriol.">
        <title>Comparative genomics of 28 Salmonella enterica isolates: evidence for CRISPR-mediated adaptive sublineage evolution.</title>
        <authorList>
            <person name="Fricke W.F."/>
            <person name="Mammel M.K."/>
            <person name="McDermott P.F."/>
            <person name="Tartera C."/>
            <person name="White D.G."/>
            <person name="Leclerc J.E."/>
            <person name="Ravel J."/>
            <person name="Cebula T.A."/>
        </authorList>
    </citation>
    <scope>NUCLEOTIDE SEQUENCE [LARGE SCALE GENOMIC DNA]</scope>
    <source>
        <strain>SL483</strain>
    </source>
</reference>
<dbReference type="EMBL" id="CP001138">
    <property type="protein sequence ID" value="ACH48988.1"/>
    <property type="molecule type" value="Genomic_DNA"/>
</dbReference>
<dbReference type="RefSeq" id="WP_000301869.1">
    <property type="nucleotide sequence ID" value="NC_011149.1"/>
</dbReference>
<dbReference type="SMR" id="B5F8E9"/>
<dbReference type="GeneID" id="97393170"/>
<dbReference type="KEGG" id="sea:SeAg_B3633"/>
<dbReference type="HOGENOM" id="CLU_036235_2_1_6"/>
<dbReference type="Proteomes" id="UP000008819">
    <property type="component" value="Chromosome"/>
</dbReference>
<dbReference type="GO" id="GO:0005829">
    <property type="term" value="C:cytosol"/>
    <property type="evidence" value="ECO:0007669"/>
    <property type="project" value="UniProtKB-ARBA"/>
</dbReference>
<dbReference type="GO" id="GO:0015934">
    <property type="term" value="C:large ribosomal subunit"/>
    <property type="evidence" value="ECO:0007669"/>
    <property type="project" value="InterPro"/>
</dbReference>
<dbReference type="GO" id="GO:0019843">
    <property type="term" value="F:rRNA binding"/>
    <property type="evidence" value="ECO:0007669"/>
    <property type="project" value="UniProtKB-UniRule"/>
</dbReference>
<dbReference type="GO" id="GO:0003735">
    <property type="term" value="F:structural constituent of ribosome"/>
    <property type="evidence" value="ECO:0007669"/>
    <property type="project" value="InterPro"/>
</dbReference>
<dbReference type="GO" id="GO:0016740">
    <property type="term" value="F:transferase activity"/>
    <property type="evidence" value="ECO:0007669"/>
    <property type="project" value="InterPro"/>
</dbReference>
<dbReference type="GO" id="GO:0002181">
    <property type="term" value="P:cytoplasmic translation"/>
    <property type="evidence" value="ECO:0007669"/>
    <property type="project" value="TreeGrafter"/>
</dbReference>
<dbReference type="FunFam" id="2.30.30.30:FF:000001">
    <property type="entry name" value="50S ribosomal protein L2"/>
    <property type="match status" value="1"/>
</dbReference>
<dbReference type="FunFam" id="2.40.50.140:FF:000003">
    <property type="entry name" value="50S ribosomal protein L2"/>
    <property type="match status" value="1"/>
</dbReference>
<dbReference type="FunFam" id="4.10.950.10:FF:000001">
    <property type="entry name" value="50S ribosomal protein L2"/>
    <property type="match status" value="1"/>
</dbReference>
<dbReference type="Gene3D" id="2.30.30.30">
    <property type="match status" value="1"/>
</dbReference>
<dbReference type="Gene3D" id="2.40.50.140">
    <property type="entry name" value="Nucleic acid-binding proteins"/>
    <property type="match status" value="1"/>
</dbReference>
<dbReference type="Gene3D" id="4.10.950.10">
    <property type="entry name" value="Ribosomal protein L2, domain 3"/>
    <property type="match status" value="1"/>
</dbReference>
<dbReference type="HAMAP" id="MF_01320_B">
    <property type="entry name" value="Ribosomal_uL2_B"/>
    <property type="match status" value="1"/>
</dbReference>
<dbReference type="InterPro" id="IPR012340">
    <property type="entry name" value="NA-bd_OB-fold"/>
</dbReference>
<dbReference type="InterPro" id="IPR014722">
    <property type="entry name" value="Rib_uL2_dom2"/>
</dbReference>
<dbReference type="InterPro" id="IPR002171">
    <property type="entry name" value="Ribosomal_uL2"/>
</dbReference>
<dbReference type="InterPro" id="IPR005880">
    <property type="entry name" value="Ribosomal_uL2_bac/org-type"/>
</dbReference>
<dbReference type="InterPro" id="IPR022669">
    <property type="entry name" value="Ribosomal_uL2_C"/>
</dbReference>
<dbReference type="InterPro" id="IPR022671">
    <property type="entry name" value="Ribosomal_uL2_CS"/>
</dbReference>
<dbReference type="InterPro" id="IPR014726">
    <property type="entry name" value="Ribosomal_uL2_dom3"/>
</dbReference>
<dbReference type="InterPro" id="IPR022666">
    <property type="entry name" value="Ribosomal_uL2_RNA-bd_dom"/>
</dbReference>
<dbReference type="InterPro" id="IPR008991">
    <property type="entry name" value="Translation_prot_SH3-like_sf"/>
</dbReference>
<dbReference type="NCBIfam" id="TIGR01171">
    <property type="entry name" value="rplB_bact"/>
    <property type="match status" value="1"/>
</dbReference>
<dbReference type="PANTHER" id="PTHR13691:SF5">
    <property type="entry name" value="LARGE RIBOSOMAL SUBUNIT PROTEIN UL2M"/>
    <property type="match status" value="1"/>
</dbReference>
<dbReference type="PANTHER" id="PTHR13691">
    <property type="entry name" value="RIBOSOMAL PROTEIN L2"/>
    <property type="match status" value="1"/>
</dbReference>
<dbReference type="Pfam" id="PF00181">
    <property type="entry name" value="Ribosomal_L2"/>
    <property type="match status" value="1"/>
</dbReference>
<dbReference type="Pfam" id="PF03947">
    <property type="entry name" value="Ribosomal_L2_C"/>
    <property type="match status" value="1"/>
</dbReference>
<dbReference type="PIRSF" id="PIRSF002158">
    <property type="entry name" value="Ribosomal_L2"/>
    <property type="match status" value="1"/>
</dbReference>
<dbReference type="SMART" id="SM01383">
    <property type="entry name" value="Ribosomal_L2"/>
    <property type="match status" value="1"/>
</dbReference>
<dbReference type="SMART" id="SM01382">
    <property type="entry name" value="Ribosomal_L2_C"/>
    <property type="match status" value="1"/>
</dbReference>
<dbReference type="SUPFAM" id="SSF50249">
    <property type="entry name" value="Nucleic acid-binding proteins"/>
    <property type="match status" value="1"/>
</dbReference>
<dbReference type="SUPFAM" id="SSF50104">
    <property type="entry name" value="Translation proteins SH3-like domain"/>
    <property type="match status" value="1"/>
</dbReference>
<dbReference type="PROSITE" id="PS00467">
    <property type="entry name" value="RIBOSOMAL_L2"/>
    <property type="match status" value="1"/>
</dbReference>
<evidence type="ECO:0000255" key="1">
    <source>
        <dbReference type="HAMAP-Rule" id="MF_01320"/>
    </source>
</evidence>
<evidence type="ECO:0000256" key="2">
    <source>
        <dbReference type="SAM" id="MobiDB-lite"/>
    </source>
</evidence>
<evidence type="ECO:0000305" key="3"/>
<organism>
    <name type="scientific">Salmonella agona (strain SL483)</name>
    <dbReference type="NCBI Taxonomy" id="454166"/>
    <lineage>
        <taxon>Bacteria</taxon>
        <taxon>Pseudomonadati</taxon>
        <taxon>Pseudomonadota</taxon>
        <taxon>Gammaproteobacteria</taxon>
        <taxon>Enterobacterales</taxon>
        <taxon>Enterobacteriaceae</taxon>
        <taxon>Salmonella</taxon>
    </lineage>
</organism>
<sequence>MAVVKCKPTSPGRRHVVKVVNPELHKGKPFAPLVEKNSKSGGRNNNGRITTRHIGGGHKQAYRIVDFKRNKDGIPAVVERLEYDPNRSANIALVLYKDGERRYILAPKGLKAGDQIQSGVDAAIKAGNTLPMRNIPVGSTVHNVEMKPGKGGQLARSAGTYVQIVARDGAYVTLRLRSGEMRKVEADCRATLGEVGNAEHMLRVLGKAGAARWRGVRPTVRGTAMNPVDHPHGGGEGRNFGKHPVTPWGVQTKGKKTRSNKRTDKFIVRRRSK</sequence>
<accession>B5F8E9</accession>